<feature type="chain" id="PRO_1000007775" description="5'-nucleotidase SurE">
    <location>
        <begin position="1"/>
        <end position="266"/>
    </location>
</feature>
<feature type="binding site" evidence="1">
    <location>
        <position position="8"/>
    </location>
    <ligand>
        <name>a divalent metal cation</name>
        <dbReference type="ChEBI" id="CHEBI:60240"/>
    </ligand>
</feature>
<feature type="binding site" evidence="1">
    <location>
        <position position="9"/>
    </location>
    <ligand>
        <name>a divalent metal cation</name>
        <dbReference type="ChEBI" id="CHEBI:60240"/>
    </ligand>
</feature>
<feature type="binding site" evidence="1">
    <location>
        <position position="39"/>
    </location>
    <ligand>
        <name>a divalent metal cation</name>
        <dbReference type="ChEBI" id="CHEBI:60240"/>
    </ligand>
</feature>
<feature type="binding site" evidence="1">
    <location>
        <position position="93"/>
    </location>
    <ligand>
        <name>a divalent metal cation</name>
        <dbReference type="ChEBI" id="CHEBI:60240"/>
    </ligand>
</feature>
<gene>
    <name evidence="1" type="primary">surE</name>
    <name type="ordered locus">Pars_0988</name>
</gene>
<evidence type="ECO:0000255" key="1">
    <source>
        <dbReference type="HAMAP-Rule" id="MF_00060"/>
    </source>
</evidence>
<keyword id="KW-0963">Cytoplasm</keyword>
<keyword id="KW-0378">Hydrolase</keyword>
<keyword id="KW-0479">Metal-binding</keyword>
<keyword id="KW-0547">Nucleotide-binding</keyword>
<protein>
    <recommendedName>
        <fullName evidence="1">5'-nucleotidase SurE</fullName>
        <ecNumber evidence="1">3.1.3.5</ecNumber>
    </recommendedName>
    <alternativeName>
        <fullName evidence="1">Nucleoside 5'-monophosphate phosphohydrolase</fullName>
    </alternativeName>
</protein>
<proteinExistence type="inferred from homology"/>
<dbReference type="EC" id="3.1.3.5" evidence="1"/>
<dbReference type="EMBL" id="CP000660">
    <property type="protein sequence ID" value="ABP50568.1"/>
    <property type="molecule type" value="Genomic_DNA"/>
</dbReference>
<dbReference type="SMR" id="A4WJK1"/>
<dbReference type="STRING" id="340102.Pars_0988"/>
<dbReference type="KEGG" id="pas:Pars_0988"/>
<dbReference type="HOGENOM" id="CLU_045192_1_3_2"/>
<dbReference type="OrthoDB" id="26873at2157"/>
<dbReference type="PhylomeDB" id="A4WJK1"/>
<dbReference type="Proteomes" id="UP000001567">
    <property type="component" value="Chromosome"/>
</dbReference>
<dbReference type="GO" id="GO:0005737">
    <property type="term" value="C:cytoplasm"/>
    <property type="evidence" value="ECO:0007669"/>
    <property type="project" value="UniProtKB-SubCell"/>
</dbReference>
<dbReference type="GO" id="GO:0008253">
    <property type="term" value="F:5'-nucleotidase activity"/>
    <property type="evidence" value="ECO:0007669"/>
    <property type="project" value="UniProtKB-UniRule"/>
</dbReference>
<dbReference type="GO" id="GO:0046872">
    <property type="term" value="F:metal ion binding"/>
    <property type="evidence" value="ECO:0007669"/>
    <property type="project" value="UniProtKB-UniRule"/>
</dbReference>
<dbReference type="GO" id="GO:0000166">
    <property type="term" value="F:nucleotide binding"/>
    <property type="evidence" value="ECO:0007669"/>
    <property type="project" value="UniProtKB-KW"/>
</dbReference>
<dbReference type="Gene3D" id="3.40.1210.10">
    <property type="entry name" value="Survival protein SurE-like phosphatase/nucleotidase"/>
    <property type="match status" value="1"/>
</dbReference>
<dbReference type="HAMAP" id="MF_00060">
    <property type="entry name" value="SurE"/>
    <property type="match status" value="1"/>
</dbReference>
<dbReference type="InterPro" id="IPR030048">
    <property type="entry name" value="SurE"/>
</dbReference>
<dbReference type="InterPro" id="IPR002828">
    <property type="entry name" value="SurE-like_Pase/nucleotidase"/>
</dbReference>
<dbReference type="InterPro" id="IPR036523">
    <property type="entry name" value="SurE-like_sf"/>
</dbReference>
<dbReference type="NCBIfam" id="NF010544">
    <property type="entry name" value="PRK13934.1"/>
    <property type="match status" value="1"/>
</dbReference>
<dbReference type="NCBIfam" id="TIGR00087">
    <property type="entry name" value="surE"/>
    <property type="match status" value="1"/>
</dbReference>
<dbReference type="PANTHER" id="PTHR30457">
    <property type="entry name" value="5'-NUCLEOTIDASE SURE"/>
    <property type="match status" value="1"/>
</dbReference>
<dbReference type="PANTHER" id="PTHR30457:SF0">
    <property type="entry name" value="PHOSPHATASE, PUTATIVE (AFU_ORTHOLOGUE AFUA_4G01070)-RELATED"/>
    <property type="match status" value="1"/>
</dbReference>
<dbReference type="Pfam" id="PF01975">
    <property type="entry name" value="SurE"/>
    <property type="match status" value="1"/>
</dbReference>
<dbReference type="SUPFAM" id="SSF64167">
    <property type="entry name" value="SurE-like"/>
    <property type="match status" value="1"/>
</dbReference>
<accession>A4WJK1</accession>
<reference key="1">
    <citation type="submission" date="2007-04" db="EMBL/GenBank/DDBJ databases">
        <title>Complete sequence of Pyrobaculum arsenaticum DSM 13514.</title>
        <authorList>
            <consortium name="US DOE Joint Genome Institute"/>
            <person name="Copeland A."/>
            <person name="Lucas S."/>
            <person name="Lapidus A."/>
            <person name="Barry K."/>
            <person name="Glavina del Rio T."/>
            <person name="Dalin E."/>
            <person name="Tice H."/>
            <person name="Pitluck S."/>
            <person name="Chain P."/>
            <person name="Malfatti S."/>
            <person name="Shin M."/>
            <person name="Vergez L."/>
            <person name="Schmutz J."/>
            <person name="Larimer F."/>
            <person name="Land M."/>
            <person name="Hauser L."/>
            <person name="Kyrpides N."/>
            <person name="Mikhailova N."/>
            <person name="Cozen A.E."/>
            <person name="Fitz-Gibbon S.T."/>
            <person name="House C.H."/>
            <person name="Saltikov C."/>
            <person name="Lowe T.M."/>
            <person name="Richardson P."/>
        </authorList>
    </citation>
    <scope>NUCLEOTIDE SEQUENCE [LARGE SCALE GENOMIC DNA]</scope>
    <source>
        <strain>ATCC 700994 / DSM 13514 / JCM 11321 / PZ6</strain>
    </source>
</reference>
<comment type="function">
    <text evidence="1">Nucleotidase that shows phosphatase activity on nucleoside 5'-monophosphates.</text>
</comment>
<comment type="catalytic activity">
    <reaction evidence="1">
        <text>a ribonucleoside 5'-phosphate + H2O = a ribonucleoside + phosphate</text>
        <dbReference type="Rhea" id="RHEA:12484"/>
        <dbReference type="ChEBI" id="CHEBI:15377"/>
        <dbReference type="ChEBI" id="CHEBI:18254"/>
        <dbReference type="ChEBI" id="CHEBI:43474"/>
        <dbReference type="ChEBI" id="CHEBI:58043"/>
        <dbReference type="EC" id="3.1.3.5"/>
    </reaction>
</comment>
<comment type="cofactor">
    <cofactor evidence="1">
        <name>a divalent metal cation</name>
        <dbReference type="ChEBI" id="CHEBI:60240"/>
    </cofactor>
    <text evidence="1">Binds 1 divalent metal cation per subunit.</text>
</comment>
<comment type="subcellular location">
    <subcellularLocation>
        <location evidence="1">Cytoplasm</location>
    </subcellularLocation>
</comment>
<comment type="similarity">
    <text evidence="1">Belongs to the SurE nucleotidase family.</text>
</comment>
<organism>
    <name type="scientific">Pyrobaculum arsenaticum (strain DSM 13514 / JCM 11321 / PZ6)</name>
    <dbReference type="NCBI Taxonomy" id="340102"/>
    <lineage>
        <taxon>Archaea</taxon>
        <taxon>Thermoproteota</taxon>
        <taxon>Thermoprotei</taxon>
        <taxon>Thermoproteales</taxon>
        <taxon>Thermoproteaceae</taxon>
        <taxon>Pyrobaculum</taxon>
    </lineage>
</organism>
<name>SURE_PYRAR</name>
<sequence>MRILITNDDGVHSPGLRLLYEFASPLGAVDVVAPESPKSATGLGITLHKPLRMYETDLCGFKAVATSGTPSDTIYLAAYGLGRRYDLVLSGINLGDNTSLQVILSSGTLGAAFQAALLGIPAVAYSLHAQDWEEVLKNREALEIMKAVVQKSAEFVLKYGLPHGVDVVSINFPRNMKRGVKAKLVRAAKFRFAQKVDRRVDPRGSSYYWLYGTDLAPEPDTDVYTVLVEGQIAVTPLTLDLNALNTDRKLDAEALAKLVRYINEAI</sequence>